<gene>
    <name evidence="1" type="primary">fluC</name>
    <name evidence="1" type="synonym">crcB</name>
    <name type="ordered locus">Nwi_0141</name>
</gene>
<proteinExistence type="inferred from homology"/>
<dbReference type="EMBL" id="CP000115">
    <property type="protein sequence ID" value="ABA03409.1"/>
    <property type="molecule type" value="Genomic_DNA"/>
</dbReference>
<dbReference type="RefSeq" id="WP_011313478.1">
    <property type="nucleotide sequence ID" value="NC_007406.1"/>
</dbReference>
<dbReference type="SMR" id="Q3SWD2"/>
<dbReference type="KEGG" id="nwi:Nwi_0141"/>
<dbReference type="eggNOG" id="COG0239">
    <property type="taxonomic scope" value="Bacteria"/>
</dbReference>
<dbReference type="HOGENOM" id="CLU_114342_2_3_5"/>
<dbReference type="OrthoDB" id="9806299at2"/>
<dbReference type="Proteomes" id="UP000002531">
    <property type="component" value="Chromosome"/>
</dbReference>
<dbReference type="GO" id="GO:0005886">
    <property type="term" value="C:plasma membrane"/>
    <property type="evidence" value="ECO:0007669"/>
    <property type="project" value="UniProtKB-SubCell"/>
</dbReference>
<dbReference type="GO" id="GO:0062054">
    <property type="term" value="F:fluoride channel activity"/>
    <property type="evidence" value="ECO:0007669"/>
    <property type="project" value="UniProtKB-UniRule"/>
</dbReference>
<dbReference type="GO" id="GO:0046872">
    <property type="term" value="F:metal ion binding"/>
    <property type="evidence" value="ECO:0007669"/>
    <property type="project" value="UniProtKB-KW"/>
</dbReference>
<dbReference type="GO" id="GO:0140114">
    <property type="term" value="P:cellular detoxification of fluoride"/>
    <property type="evidence" value="ECO:0007669"/>
    <property type="project" value="UniProtKB-UniRule"/>
</dbReference>
<dbReference type="HAMAP" id="MF_00454">
    <property type="entry name" value="FluC"/>
    <property type="match status" value="1"/>
</dbReference>
<dbReference type="InterPro" id="IPR003691">
    <property type="entry name" value="FluC"/>
</dbReference>
<dbReference type="NCBIfam" id="TIGR00494">
    <property type="entry name" value="crcB"/>
    <property type="match status" value="1"/>
</dbReference>
<dbReference type="NCBIfam" id="NF010791">
    <property type="entry name" value="PRK14195.1"/>
    <property type="match status" value="1"/>
</dbReference>
<dbReference type="NCBIfam" id="NF010794">
    <property type="entry name" value="PRK14198.1"/>
    <property type="match status" value="1"/>
</dbReference>
<dbReference type="PANTHER" id="PTHR28259">
    <property type="entry name" value="FLUORIDE EXPORT PROTEIN 1-RELATED"/>
    <property type="match status" value="1"/>
</dbReference>
<dbReference type="PANTHER" id="PTHR28259:SF1">
    <property type="entry name" value="FLUORIDE EXPORT PROTEIN 1-RELATED"/>
    <property type="match status" value="1"/>
</dbReference>
<dbReference type="Pfam" id="PF02537">
    <property type="entry name" value="CRCB"/>
    <property type="match status" value="1"/>
</dbReference>
<comment type="function">
    <text evidence="1">Fluoride-specific ion channel. Important for reducing fluoride concentration in the cell, thus reducing its toxicity.</text>
</comment>
<comment type="catalytic activity">
    <reaction evidence="1">
        <text>fluoride(in) = fluoride(out)</text>
        <dbReference type="Rhea" id="RHEA:76159"/>
        <dbReference type="ChEBI" id="CHEBI:17051"/>
    </reaction>
    <physiologicalReaction direction="left-to-right" evidence="1">
        <dbReference type="Rhea" id="RHEA:76160"/>
    </physiologicalReaction>
</comment>
<comment type="activity regulation">
    <text evidence="1">Na(+) is not transported, but it plays an essential structural role and its presence is essential for fluoride channel function.</text>
</comment>
<comment type="subcellular location">
    <subcellularLocation>
        <location evidence="1">Cell inner membrane</location>
        <topology evidence="1">Multi-pass membrane protein</topology>
    </subcellularLocation>
</comment>
<comment type="similarity">
    <text evidence="1">Belongs to the fluoride channel Fluc/FEX (TC 1.A.43) family.</text>
</comment>
<feature type="chain" id="PRO_0000252903" description="Fluoride-specific ion channel FluC">
    <location>
        <begin position="1"/>
        <end position="126"/>
    </location>
</feature>
<feature type="transmembrane region" description="Helical" evidence="1">
    <location>
        <begin position="5"/>
        <end position="25"/>
    </location>
</feature>
<feature type="transmembrane region" description="Helical" evidence="1">
    <location>
        <begin position="39"/>
        <end position="59"/>
    </location>
</feature>
<feature type="transmembrane region" description="Helical" evidence="1">
    <location>
        <begin position="69"/>
        <end position="89"/>
    </location>
</feature>
<feature type="transmembrane region" description="Helical" evidence="1">
    <location>
        <begin position="103"/>
        <end position="123"/>
    </location>
</feature>
<feature type="binding site" evidence="1">
    <location>
        <position position="77"/>
    </location>
    <ligand>
        <name>Na(+)</name>
        <dbReference type="ChEBI" id="CHEBI:29101"/>
        <note>structural</note>
    </ligand>
</feature>
<feature type="binding site" evidence="1">
    <location>
        <position position="80"/>
    </location>
    <ligand>
        <name>Na(+)</name>
        <dbReference type="ChEBI" id="CHEBI:29101"/>
        <note>structural</note>
    </ligand>
</feature>
<evidence type="ECO:0000255" key="1">
    <source>
        <dbReference type="HAMAP-Rule" id="MF_00454"/>
    </source>
</evidence>
<organism>
    <name type="scientific">Nitrobacter winogradskyi (strain ATCC 25391 / DSM 10237 / CIP 104748 / NCIMB 11846 / Nb-255)</name>
    <dbReference type="NCBI Taxonomy" id="323098"/>
    <lineage>
        <taxon>Bacteria</taxon>
        <taxon>Pseudomonadati</taxon>
        <taxon>Pseudomonadota</taxon>
        <taxon>Alphaproteobacteria</taxon>
        <taxon>Hyphomicrobiales</taxon>
        <taxon>Nitrobacteraceae</taxon>
        <taxon>Nitrobacter</taxon>
    </lineage>
</organism>
<accession>Q3SWD2</accession>
<name>FLUC_NITWN</name>
<reference key="1">
    <citation type="journal article" date="2006" name="Appl. Environ. Microbiol.">
        <title>Genome sequence of the chemolithoautotrophic nitrite-oxidizing bacterium Nitrobacter winogradskyi Nb-255.</title>
        <authorList>
            <person name="Starkenburg S.R."/>
            <person name="Chain P.S.G."/>
            <person name="Sayavedra-Soto L.A."/>
            <person name="Hauser L."/>
            <person name="Land M.L."/>
            <person name="Larimer F.W."/>
            <person name="Malfatti S.A."/>
            <person name="Klotz M.G."/>
            <person name="Bottomley P.J."/>
            <person name="Arp D.J."/>
            <person name="Hickey W.J."/>
        </authorList>
    </citation>
    <scope>NUCLEOTIDE SEQUENCE [LARGE SCALE GENOMIC DNA]</scope>
    <source>
        <strain>ATCC 25391 / DSM 10237 / CIP 104748 / NCIMB 11846 / Nb-255</strain>
    </source>
</reference>
<keyword id="KW-0997">Cell inner membrane</keyword>
<keyword id="KW-1003">Cell membrane</keyword>
<keyword id="KW-0407">Ion channel</keyword>
<keyword id="KW-0406">Ion transport</keyword>
<keyword id="KW-0472">Membrane</keyword>
<keyword id="KW-0479">Metal-binding</keyword>
<keyword id="KW-1185">Reference proteome</keyword>
<keyword id="KW-0915">Sodium</keyword>
<keyword id="KW-0812">Transmembrane</keyword>
<keyword id="KW-1133">Transmembrane helix</keyword>
<keyword id="KW-0813">Transport</keyword>
<sequence>MKWTFILAVAAGGALGSVARYLVGIGFGKWLGPKFPWGTLFINVTGSLLIGIFAGLFAVRWSLPQAARIFLVVGICGGYTTFSTFSLDTFYLIERGEMASAAAYMIGSVVLSVGALIAGIQIVRVI</sequence>
<protein>
    <recommendedName>
        <fullName evidence="1">Fluoride-specific ion channel FluC</fullName>
    </recommendedName>
</protein>